<sequence length="1143" mass="121857">MHNTNLKYFTSPLNSTTLASSAMLYHSTLRSSSPKSAICGRFSGKSQQVITLSSTGNALYLYSHDGDTGTVTLIHTHLTHCQVREIRAFRLPGLKKDYVIASSDSGVISVLEFRHNRFVSLHKEAYGRSGIRRVVPGEFLAVDPKGRACMLASVEKSKLVYVLNRQGADIVISSPLEAHTSCVTYFVVACDVAYENPVFAAIETPVGETSPGKQLVFYELDLGLNHVIRKAPVDIPNSTSHVTAVPGGTDGPGGVLVFSTNAIVHHVAGAAGGASTGAAGSTKIALPKPAAGYDNVIVASALHQSRDLFFYIAQNTRGDLFKISRDSETQHWSVLYFGTMSCVCTSLTILKSAHMVCLSEQGDSHMMFFESLGDDDAPENVYDVISPSPYLTVTQTLFELKPVFDSVVGVNTTSSDHVGPVPNVLSLISATRGGLKLISHALKPSIIVASPLPEPPSKLWTMRDGAGSDKYIVLSYANATLVLEIGDSVVETTSSGLTLDKPTLHCGSVGSSYVQVMTDGMNVIPMSREGSSESLPATKWTAPSGQVICASSSSHQVVLGLTSSLFYFEDTPGSELSAYDGAYELSSPPTAVAVAPVPAGRVRSPFVAVATDDETVRIVSVDPESMFETVAVQGLMATASSLALLSVGQVLYLHMGLANGVYVRVELDPLTGEIVGSWSKFVGLGRLSVVPVTCGGEESILVSSRGVKTCLGHVNATSDTWVPTGGNSAPFFALDAISGEPLDLAHSFHTQDCPHGVIGVAGSTLKIFTVNTAQKWTENEVKLEGTAKRLIQHDATTLTITQNPDRLVSVDNGAVGITKDLGGPPTSICEVMFGDGKRYFAVGGSRDGSPGTSGTSGYISIFSSSSLGHVHTTEVEAPPLALCAYNGLLVAGIGSQVRLYALGLKQVLRKAQIELSKRVTCLAHFAGSNRVAVGDIRQSVTVCVVLEEDSGHVIYPLVCDKISRQVTCLFFVDYETVALGDRFGGFTMLRIPSEASKLADEDHNAVHLRQLEPTLNGPAHFRFDHVASFHIEDVPVAIHMYNDYLVVCGLLGTVSAFVPVVSPKQSRDLKTIEKFVCASDPGLMGRDHGRFRGYYVPVKEVVDGDMLREVLVMDEKRREEVGEKTGLGVEGAVGRVVNVMKCV</sequence>
<accession>Q6CAH5</accession>
<gene>
    <name type="primary">RSE1</name>
    <name type="ordered locus">YALI0D02717g</name>
</gene>
<reference key="1">
    <citation type="journal article" date="2004" name="Nature">
        <title>Genome evolution in yeasts.</title>
        <authorList>
            <person name="Dujon B."/>
            <person name="Sherman D."/>
            <person name="Fischer G."/>
            <person name="Durrens P."/>
            <person name="Casaregola S."/>
            <person name="Lafontaine I."/>
            <person name="de Montigny J."/>
            <person name="Marck C."/>
            <person name="Neuveglise C."/>
            <person name="Talla E."/>
            <person name="Goffard N."/>
            <person name="Frangeul L."/>
            <person name="Aigle M."/>
            <person name="Anthouard V."/>
            <person name="Babour A."/>
            <person name="Barbe V."/>
            <person name="Barnay S."/>
            <person name="Blanchin S."/>
            <person name="Beckerich J.-M."/>
            <person name="Beyne E."/>
            <person name="Bleykasten C."/>
            <person name="Boisrame A."/>
            <person name="Boyer J."/>
            <person name="Cattolico L."/>
            <person name="Confanioleri F."/>
            <person name="de Daruvar A."/>
            <person name="Despons L."/>
            <person name="Fabre E."/>
            <person name="Fairhead C."/>
            <person name="Ferry-Dumazet H."/>
            <person name="Groppi A."/>
            <person name="Hantraye F."/>
            <person name="Hennequin C."/>
            <person name="Jauniaux N."/>
            <person name="Joyet P."/>
            <person name="Kachouri R."/>
            <person name="Kerrest A."/>
            <person name="Koszul R."/>
            <person name="Lemaire M."/>
            <person name="Lesur I."/>
            <person name="Ma L."/>
            <person name="Muller H."/>
            <person name="Nicaud J.-M."/>
            <person name="Nikolski M."/>
            <person name="Oztas S."/>
            <person name="Ozier-Kalogeropoulos O."/>
            <person name="Pellenz S."/>
            <person name="Potier S."/>
            <person name="Richard G.-F."/>
            <person name="Straub M.-L."/>
            <person name="Suleau A."/>
            <person name="Swennen D."/>
            <person name="Tekaia F."/>
            <person name="Wesolowski-Louvel M."/>
            <person name="Westhof E."/>
            <person name="Wirth B."/>
            <person name="Zeniou-Meyer M."/>
            <person name="Zivanovic Y."/>
            <person name="Bolotin-Fukuhara M."/>
            <person name="Thierry A."/>
            <person name="Bouchier C."/>
            <person name="Caudron B."/>
            <person name="Scarpelli C."/>
            <person name="Gaillardin C."/>
            <person name="Weissenbach J."/>
            <person name="Wincker P."/>
            <person name="Souciet J.-L."/>
        </authorList>
    </citation>
    <scope>NUCLEOTIDE SEQUENCE [LARGE SCALE GENOMIC DNA]</scope>
    <source>
        <strain>CLIB 122 / E 150</strain>
    </source>
</reference>
<comment type="function">
    <text evidence="1">Involved in pre-mRNA splicing.</text>
</comment>
<comment type="subunit">
    <text evidence="1">Associated with the spliceosome.</text>
</comment>
<comment type="subcellular location">
    <subcellularLocation>
        <location evidence="1">Nucleus</location>
    </subcellularLocation>
</comment>
<comment type="similarity">
    <text evidence="2">Belongs to the RSE1 family.</text>
</comment>
<dbReference type="EMBL" id="CR382130">
    <property type="protein sequence ID" value="CAG80525.1"/>
    <property type="molecule type" value="Genomic_DNA"/>
</dbReference>
<dbReference type="RefSeq" id="XP_502337.1">
    <property type="nucleotide sequence ID" value="XM_502337.1"/>
</dbReference>
<dbReference type="SMR" id="Q6CAH5"/>
<dbReference type="FunCoup" id="Q6CAH5">
    <property type="interactions" value="1375"/>
</dbReference>
<dbReference type="STRING" id="284591.Q6CAH5"/>
<dbReference type="EnsemblFungi" id="CAG80525">
    <property type="protein sequence ID" value="CAG80525"/>
    <property type="gene ID" value="YALI0_D02717g"/>
</dbReference>
<dbReference type="KEGG" id="yli:2910539"/>
<dbReference type="VEuPathDB" id="FungiDB:YALI0_D02717g"/>
<dbReference type="HOGENOM" id="CLU_003246_0_0_1"/>
<dbReference type="InParanoid" id="Q6CAH5"/>
<dbReference type="OMA" id="PRATGHW"/>
<dbReference type="OrthoDB" id="7111at4891"/>
<dbReference type="Proteomes" id="UP000001300">
    <property type="component" value="Chromosome D"/>
</dbReference>
<dbReference type="GO" id="GO:0005634">
    <property type="term" value="C:nucleus"/>
    <property type="evidence" value="ECO:0000318"/>
    <property type="project" value="GO_Central"/>
</dbReference>
<dbReference type="GO" id="GO:0005681">
    <property type="term" value="C:spliceosomal complex"/>
    <property type="evidence" value="ECO:0007669"/>
    <property type="project" value="UniProtKB-KW"/>
</dbReference>
<dbReference type="GO" id="GO:0005686">
    <property type="term" value="C:U2 snRNP"/>
    <property type="evidence" value="ECO:0000318"/>
    <property type="project" value="GO_Central"/>
</dbReference>
<dbReference type="GO" id="GO:0030620">
    <property type="term" value="F:U2 snRNA binding"/>
    <property type="evidence" value="ECO:0000318"/>
    <property type="project" value="GO_Central"/>
</dbReference>
<dbReference type="GO" id="GO:0000398">
    <property type="term" value="P:mRNA splicing, via spliceosome"/>
    <property type="evidence" value="ECO:0000318"/>
    <property type="project" value="GO_Central"/>
</dbReference>
<dbReference type="Gene3D" id="2.130.10.10">
    <property type="entry name" value="YVTN repeat-like/Quinoprotein amine dehydrogenase"/>
    <property type="match status" value="2"/>
</dbReference>
<dbReference type="InterPro" id="IPR018846">
    <property type="entry name" value="Beta-prop_RSE1/DDB1/CPSF1_1st"/>
</dbReference>
<dbReference type="InterPro" id="IPR004871">
    <property type="entry name" value="Cleavage/polyA-sp_fac_asu_C"/>
</dbReference>
<dbReference type="InterPro" id="IPR050358">
    <property type="entry name" value="RSE1/DDB1/CFT1/CPSF1"/>
</dbReference>
<dbReference type="InterPro" id="IPR015943">
    <property type="entry name" value="WD40/YVTN_repeat-like_dom_sf"/>
</dbReference>
<dbReference type="InterPro" id="IPR036322">
    <property type="entry name" value="WD40_repeat_dom_sf"/>
</dbReference>
<dbReference type="PANTHER" id="PTHR10644">
    <property type="entry name" value="DNA REPAIR/RNA PROCESSING CPSF FAMILY"/>
    <property type="match status" value="1"/>
</dbReference>
<dbReference type="Pfam" id="PF10433">
    <property type="entry name" value="Beta-prop_RSE1_1st"/>
    <property type="match status" value="1"/>
</dbReference>
<dbReference type="Pfam" id="PF23726">
    <property type="entry name" value="Beta-prop_RSE1_2nd"/>
    <property type="match status" value="1"/>
</dbReference>
<dbReference type="Pfam" id="PF03178">
    <property type="entry name" value="CPSF_A"/>
    <property type="match status" value="1"/>
</dbReference>
<dbReference type="SUPFAM" id="SSF50978">
    <property type="entry name" value="WD40 repeat-like"/>
    <property type="match status" value="1"/>
</dbReference>
<organism>
    <name type="scientific">Yarrowia lipolytica (strain CLIB 122 / E 150)</name>
    <name type="common">Yeast</name>
    <name type="synonym">Candida lipolytica</name>
    <dbReference type="NCBI Taxonomy" id="284591"/>
    <lineage>
        <taxon>Eukaryota</taxon>
        <taxon>Fungi</taxon>
        <taxon>Dikarya</taxon>
        <taxon>Ascomycota</taxon>
        <taxon>Saccharomycotina</taxon>
        <taxon>Dipodascomycetes</taxon>
        <taxon>Dipodascales</taxon>
        <taxon>Dipodascales incertae sedis</taxon>
        <taxon>Yarrowia</taxon>
    </lineage>
</organism>
<feature type="chain" id="PRO_0000218637" description="Pre-mRNA-splicing factor RSE1">
    <location>
        <begin position="1"/>
        <end position="1143"/>
    </location>
</feature>
<keyword id="KW-0507">mRNA processing</keyword>
<keyword id="KW-0508">mRNA splicing</keyword>
<keyword id="KW-0539">Nucleus</keyword>
<keyword id="KW-1185">Reference proteome</keyword>
<keyword id="KW-0747">Spliceosome</keyword>
<protein>
    <recommendedName>
        <fullName>Pre-mRNA-splicing factor RSE1</fullName>
    </recommendedName>
</protein>
<proteinExistence type="inferred from homology"/>
<evidence type="ECO:0000250" key="1"/>
<evidence type="ECO:0000305" key="2"/>
<name>RSE1_YARLI</name>